<evidence type="ECO:0000250" key="1"/>
<evidence type="ECO:0000305" key="2"/>
<keyword id="KW-0150">Chloroplast</keyword>
<keyword id="KW-0934">Plastid</keyword>
<keyword id="KW-0687">Ribonucleoprotein</keyword>
<keyword id="KW-0689">Ribosomal protein</keyword>
<keyword id="KW-0694">RNA-binding</keyword>
<keyword id="KW-0699">rRNA-binding</keyword>
<dbReference type="EMBL" id="X65615">
    <property type="protein sequence ID" value="CAA46567.1"/>
    <property type="molecule type" value="Genomic_DNA"/>
</dbReference>
<dbReference type="RefSeq" id="YP_009730708.1">
    <property type="nucleotide sequence ID" value="NC_045948.1"/>
</dbReference>
<dbReference type="RefSeq" id="YP_009730727.1">
    <property type="nucleotide sequence ID" value="NC_045948.1"/>
</dbReference>
<dbReference type="SMR" id="P61846"/>
<dbReference type="GeneID" id="43960657"/>
<dbReference type="GeneID" id="43960699"/>
<dbReference type="OrthoDB" id="563989at2759"/>
<dbReference type="GO" id="GO:0009507">
    <property type="term" value="C:chloroplast"/>
    <property type="evidence" value="ECO:0007669"/>
    <property type="project" value="UniProtKB-SubCell"/>
</dbReference>
<dbReference type="GO" id="GO:1990904">
    <property type="term" value="C:ribonucleoprotein complex"/>
    <property type="evidence" value="ECO:0007669"/>
    <property type="project" value="UniProtKB-KW"/>
</dbReference>
<dbReference type="GO" id="GO:0005840">
    <property type="term" value="C:ribosome"/>
    <property type="evidence" value="ECO:0007669"/>
    <property type="project" value="UniProtKB-KW"/>
</dbReference>
<dbReference type="GO" id="GO:0003729">
    <property type="term" value="F:mRNA binding"/>
    <property type="evidence" value="ECO:0007669"/>
    <property type="project" value="UniProtKB-ARBA"/>
</dbReference>
<dbReference type="GO" id="GO:0019843">
    <property type="term" value="F:rRNA binding"/>
    <property type="evidence" value="ECO:0007669"/>
    <property type="project" value="UniProtKB-UniRule"/>
</dbReference>
<dbReference type="GO" id="GO:0003735">
    <property type="term" value="F:structural constituent of ribosome"/>
    <property type="evidence" value="ECO:0007669"/>
    <property type="project" value="InterPro"/>
</dbReference>
<dbReference type="GO" id="GO:0006412">
    <property type="term" value="P:translation"/>
    <property type="evidence" value="ECO:0007669"/>
    <property type="project" value="UniProtKB-UniRule"/>
</dbReference>
<dbReference type="FunFam" id="3.30.70.330:FF:000002">
    <property type="entry name" value="50S ribosomal protein L23, chloroplastic"/>
    <property type="match status" value="1"/>
</dbReference>
<dbReference type="Gene3D" id="3.30.70.330">
    <property type="match status" value="1"/>
</dbReference>
<dbReference type="HAMAP" id="MF_01369_B">
    <property type="entry name" value="Ribosomal_uL23_B"/>
    <property type="match status" value="1"/>
</dbReference>
<dbReference type="InterPro" id="IPR012677">
    <property type="entry name" value="Nucleotide-bd_a/b_plait_sf"/>
</dbReference>
<dbReference type="InterPro" id="IPR013025">
    <property type="entry name" value="Ribosomal_uL23-like"/>
</dbReference>
<dbReference type="InterPro" id="IPR012678">
    <property type="entry name" value="Ribosomal_uL23/eL15/eS24_sf"/>
</dbReference>
<dbReference type="InterPro" id="IPR001014">
    <property type="entry name" value="Ribosomal_uL23_CS"/>
</dbReference>
<dbReference type="PANTHER" id="PTHR11620">
    <property type="entry name" value="60S RIBOSOMAL PROTEIN L23A"/>
    <property type="match status" value="1"/>
</dbReference>
<dbReference type="Pfam" id="PF00276">
    <property type="entry name" value="Ribosomal_L23"/>
    <property type="match status" value="1"/>
</dbReference>
<dbReference type="SUPFAM" id="SSF54189">
    <property type="entry name" value="Ribosomal proteins S24e, L23 and L15e"/>
    <property type="match status" value="1"/>
</dbReference>
<dbReference type="PROSITE" id="PS00050">
    <property type="entry name" value="RIBOSOMAL_L23"/>
    <property type="match status" value="1"/>
</dbReference>
<feature type="chain" id="PRO_0000129463" description="Large ribosomal subunit protein uL23c">
    <location>
        <begin position="1"/>
        <end position="93"/>
    </location>
</feature>
<sequence>MDGIKYAVFTDKSIRLLGKNQYTFNVESGSTRTEIKHWVELFFGVKVIAMNSHRLPGKVKRMGPILGHTMHYRRMIITLQPGYSIPPLRKKRT</sequence>
<protein>
    <recommendedName>
        <fullName evidence="2">Large ribosomal subunit protein uL23c</fullName>
    </recommendedName>
    <alternativeName>
        <fullName>50S ribosomal protein L23, chloroplastic</fullName>
    </alternativeName>
</protein>
<accession>P61846</accession>
<accession>P27108</accession>
<accession>Q01938</accession>
<gene>
    <name type="primary">rpl23</name>
</gene>
<comment type="function">
    <text evidence="1">Binds to 23S rRNA.</text>
</comment>
<comment type="subunit">
    <text evidence="1">Part of the 50S ribosomal subunit.</text>
</comment>
<comment type="subcellular location">
    <subcellularLocation>
        <location>Plastid</location>
        <location>Chloroplast</location>
    </subcellularLocation>
</comment>
<comment type="similarity">
    <text evidence="2">Belongs to the universal ribosomal protein uL23 family.</text>
</comment>
<organism>
    <name type="scientific">Sinapis alba</name>
    <name type="common">White mustard</name>
    <name type="synonym">Brassica hirta</name>
    <dbReference type="NCBI Taxonomy" id="3728"/>
    <lineage>
        <taxon>Eukaryota</taxon>
        <taxon>Viridiplantae</taxon>
        <taxon>Streptophyta</taxon>
        <taxon>Embryophyta</taxon>
        <taxon>Tracheophyta</taxon>
        <taxon>Spermatophyta</taxon>
        <taxon>Magnoliopsida</taxon>
        <taxon>eudicotyledons</taxon>
        <taxon>Gunneridae</taxon>
        <taxon>Pentapetalae</taxon>
        <taxon>rosids</taxon>
        <taxon>malvids</taxon>
        <taxon>Brassicales</taxon>
        <taxon>Brassicaceae</taxon>
        <taxon>Brassiceae</taxon>
        <taxon>Sinapis</taxon>
    </lineage>
</organism>
<name>RK23_SINAL</name>
<reference key="1">
    <citation type="submission" date="1992-04" db="EMBL/GenBank/DDBJ databases">
        <authorList>
            <person name="Nickelsen J."/>
            <person name="Link G."/>
        </authorList>
    </citation>
    <scope>NUCLEOTIDE SEQUENCE [GENOMIC DNA]</scope>
    <source>
        <strain>cv. Albatros</strain>
        <tissue>Cotyledon</tissue>
    </source>
</reference>
<proteinExistence type="inferred from homology"/>
<geneLocation type="chloroplast"/>